<sequence>MTQVAKKILVTCALPYANGSIHLGHMLEHIQADVWVRYQRMRGHEVNFICADDAHGTPIMLKAQQLGITPEQMIGEMSQEHQTDFAGFNISYDNYHSTHSEENRQLSELIYTRLKENGFIKNRTISQLYDPEKGMFLPDRFVKGTCPKCKSPDQYGDNCEVCGATYSPTELIEPKSVVSGATPVMRDSEHFFFDLPSFSEMLQAWTRSGALQEQVANKMQEWFESGLQQWDISRDAPYFGFEIPNAPGKYFYVWLDAPIGYMGSFKNLCDKRGDSVSFDEYWKKDSTAELYHFIGKDIVYFHSLFWPAMLEGSNFRKPTNLFVHGYVTVNGAKMSKSRGTFIKASTWLNHFDADSLRYYYTAKLSSRIDDIDLNLEDFVQRVNADIVNKVVNLASRNAGFINKRFDGVLASELADPQLYKTFTDAAEVIGEAWESREFGKAVREIMALADLANRYVDEQAPWVVAKQEGRDADLQAICSMGINLFRVLMTYLKPVLPKLTERAEAFLNTELTWDGIQQPLLGHKVNPFKALYNRIDMKQVEALVEASKEEVKAAAAPVTGPLADDPIQETITFDDFAKVDLRVALIENAEFVEGSDKLLRLTLDLGGEKRNVFSGIRSAYPDPQALIGRHTIMVANLAPRKMRFGISEGMVMAAGPGGKDIFLLSPDAGAKPGHQVK</sequence>
<organism>
    <name type="scientific">Escherichia coli O157:H7</name>
    <dbReference type="NCBI Taxonomy" id="83334"/>
    <lineage>
        <taxon>Bacteria</taxon>
        <taxon>Pseudomonadati</taxon>
        <taxon>Pseudomonadota</taxon>
        <taxon>Gammaproteobacteria</taxon>
        <taxon>Enterobacterales</taxon>
        <taxon>Enterobacteriaceae</taxon>
        <taxon>Escherichia</taxon>
    </lineage>
</organism>
<reference key="1">
    <citation type="journal article" date="2001" name="Nature">
        <title>Genome sequence of enterohaemorrhagic Escherichia coli O157:H7.</title>
        <authorList>
            <person name="Perna N.T."/>
            <person name="Plunkett G. III"/>
            <person name="Burland V."/>
            <person name="Mau B."/>
            <person name="Glasner J.D."/>
            <person name="Rose D.J."/>
            <person name="Mayhew G.F."/>
            <person name="Evans P.S."/>
            <person name="Gregor J."/>
            <person name="Kirkpatrick H.A."/>
            <person name="Posfai G."/>
            <person name="Hackett J."/>
            <person name="Klink S."/>
            <person name="Boutin A."/>
            <person name="Shao Y."/>
            <person name="Miller L."/>
            <person name="Grotbeck E.J."/>
            <person name="Davis N.W."/>
            <person name="Lim A."/>
            <person name="Dimalanta E.T."/>
            <person name="Potamousis K."/>
            <person name="Apodaca J."/>
            <person name="Anantharaman T.S."/>
            <person name="Lin J."/>
            <person name="Yen G."/>
            <person name="Schwartz D.C."/>
            <person name="Welch R.A."/>
            <person name="Blattner F.R."/>
        </authorList>
    </citation>
    <scope>NUCLEOTIDE SEQUENCE [LARGE SCALE GENOMIC DNA]</scope>
    <source>
        <strain>O157:H7 / EDL933 / ATCC 700927 / EHEC</strain>
    </source>
</reference>
<reference key="2">
    <citation type="journal article" date="2001" name="DNA Res.">
        <title>Complete genome sequence of enterohemorrhagic Escherichia coli O157:H7 and genomic comparison with a laboratory strain K-12.</title>
        <authorList>
            <person name="Hayashi T."/>
            <person name="Makino K."/>
            <person name="Ohnishi M."/>
            <person name="Kurokawa K."/>
            <person name="Ishii K."/>
            <person name="Yokoyama K."/>
            <person name="Han C.-G."/>
            <person name="Ohtsubo E."/>
            <person name="Nakayama K."/>
            <person name="Murata T."/>
            <person name="Tanaka M."/>
            <person name="Tobe T."/>
            <person name="Iida T."/>
            <person name="Takami H."/>
            <person name="Honda T."/>
            <person name="Sasakawa C."/>
            <person name="Ogasawara N."/>
            <person name="Yasunaga T."/>
            <person name="Kuhara S."/>
            <person name="Shiba T."/>
            <person name="Hattori M."/>
            <person name="Shinagawa H."/>
        </authorList>
    </citation>
    <scope>NUCLEOTIDE SEQUENCE [LARGE SCALE GENOMIC DNA]</scope>
    <source>
        <strain>O157:H7 / Sakai / RIMD 0509952 / EHEC</strain>
    </source>
</reference>
<keyword id="KW-0030">Aminoacyl-tRNA synthetase</keyword>
<keyword id="KW-0067">ATP-binding</keyword>
<keyword id="KW-0963">Cytoplasm</keyword>
<keyword id="KW-0436">Ligase</keyword>
<keyword id="KW-0479">Metal-binding</keyword>
<keyword id="KW-0547">Nucleotide-binding</keyword>
<keyword id="KW-0648">Protein biosynthesis</keyword>
<keyword id="KW-1185">Reference proteome</keyword>
<keyword id="KW-0694">RNA-binding</keyword>
<keyword id="KW-0820">tRNA-binding</keyword>
<keyword id="KW-0862">Zinc</keyword>
<name>SYM_ECO57</name>
<comment type="function">
    <text evidence="2">Is required not only for elongation of protein synthesis but also for the initiation of all mRNA translation through initiator tRNA(fMet) aminoacylation.</text>
</comment>
<comment type="catalytic activity">
    <reaction evidence="2">
        <text>tRNA(Met) + L-methionine + ATP = L-methionyl-tRNA(Met) + AMP + diphosphate</text>
        <dbReference type="Rhea" id="RHEA:13481"/>
        <dbReference type="Rhea" id="RHEA-COMP:9667"/>
        <dbReference type="Rhea" id="RHEA-COMP:9698"/>
        <dbReference type="ChEBI" id="CHEBI:30616"/>
        <dbReference type="ChEBI" id="CHEBI:33019"/>
        <dbReference type="ChEBI" id="CHEBI:57844"/>
        <dbReference type="ChEBI" id="CHEBI:78442"/>
        <dbReference type="ChEBI" id="CHEBI:78530"/>
        <dbReference type="ChEBI" id="CHEBI:456215"/>
        <dbReference type="EC" id="6.1.1.10"/>
    </reaction>
</comment>
<comment type="cofactor">
    <cofactor evidence="2">
        <name>Zn(2+)</name>
        <dbReference type="ChEBI" id="CHEBI:29105"/>
    </cofactor>
    <text evidence="2">Binds 1 zinc ion per subunit.</text>
</comment>
<comment type="subunit">
    <text evidence="2">Homodimer.</text>
</comment>
<comment type="subcellular location">
    <subcellularLocation>
        <location evidence="2">Cytoplasm</location>
    </subcellularLocation>
</comment>
<comment type="similarity">
    <text evidence="2">Belongs to the class-I aminoacyl-tRNA synthetase family. MetG type 1 subfamily.</text>
</comment>
<dbReference type="EC" id="6.1.1.10" evidence="2"/>
<dbReference type="EMBL" id="AE005174">
    <property type="protein sequence ID" value="AAG57175.1"/>
    <property type="molecule type" value="Genomic_DNA"/>
</dbReference>
<dbReference type="EMBL" id="BA000007">
    <property type="protein sequence ID" value="BAB36343.1"/>
    <property type="molecule type" value="Genomic_DNA"/>
</dbReference>
<dbReference type="PIR" id="C85839">
    <property type="entry name" value="C85839"/>
</dbReference>
<dbReference type="PIR" id="H90993">
    <property type="entry name" value="H90993"/>
</dbReference>
<dbReference type="RefSeq" id="NP_310947.1">
    <property type="nucleotide sequence ID" value="NC_002695.1"/>
</dbReference>
<dbReference type="RefSeq" id="WP_001301615.1">
    <property type="nucleotide sequence ID" value="NZ_VOAI01000013.1"/>
</dbReference>
<dbReference type="SMR" id="Q8X7E7"/>
<dbReference type="STRING" id="155864.Z3282"/>
<dbReference type="GeneID" id="75172235"/>
<dbReference type="GeneID" id="916623"/>
<dbReference type="KEGG" id="ece:Z3282"/>
<dbReference type="KEGG" id="ecs:ECs_2920"/>
<dbReference type="PATRIC" id="fig|386585.9.peg.3051"/>
<dbReference type="eggNOG" id="COG0073">
    <property type="taxonomic scope" value="Bacteria"/>
</dbReference>
<dbReference type="eggNOG" id="COG0143">
    <property type="taxonomic scope" value="Bacteria"/>
</dbReference>
<dbReference type="HOGENOM" id="CLU_009710_7_0_6"/>
<dbReference type="OMA" id="NMFLPDR"/>
<dbReference type="Proteomes" id="UP000000558">
    <property type="component" value="Chromosome"/>
</dbReference>
<dbReference type="Proteomes" id="UP000002519">
    <property type="component" value="Chromosome"/>
</dbReference>
<dbReference type="GO" id="GO:0005829">
    <property type="term" value="C:cytosol"/>
    <property type="evidence" value="ECO:0007669"/>
    <property type="project" value="TreeGrafter"/>
</dbReference>
<dbReference type="GO" id="GO:0005524">
    <property type="term" value="F:ATP binding"/>
    <property type="evidence" value="ECO:0007669"/>
    <property type="project" value="UniProtKB-UniRule"/>
</dbReference>
<dbReference type="GO" id="GO:0046872">
    <property type="term" value="F:metal ion binding"/>
    <property type="evidence" value="ECO:0007669"/>
    <property type="project" value="UniProtKB-KW"/>
</dbReference>
<dbReference type="GO" id="GO:0004825">
    <property type="term" value="F:methionine-tRNA ligase activity"/>
    <property type="evidence" value="ECO:0007669"/>
    <property type="project" value="UniProtKB-UniRule"/>
</dbReference>
<dbReference type="GO" id="GO:0000049">
    <property type="term" value="F:tRNA binding"/>
    <property type="evidence" value="ECO:0007669"/>
    <property type="project" value="UniProtKB-KW"/>
</dbReference>
<dbReference type="GO" id="GO:0006431">
    <property type="term" value="P:methionyl-tRNA aminoacylation"/>
    <property type="evidence" value="ECO:0007669"/>
    <property type="project" value="UniProtKB-UniRule"/>
</dbReference>
<dbReference type="CDD" id="cd07957">
    <property type="entry name" value="Anticodon_Ia_Met"/>
    <property type="match status" value="1"/>
</dbReference>
<dbReference type="CDD" id="cd00814">
    <property type="entry name" value="MetRS_core"/>
    <property type="match status" value="1"/>
</dbReference>
<dbReference type="CDD" id="cd02800">
    <property type="entry name" value="tRNA_bind_EcMetRS_like"/>
    <property type="match status" value="1"/>
</dbReference>
<dbReference type="FunFam" id="1.10.730.10:FF:000005">
    <property type="entry name" value="Methionine--tRNA ligase"/>
    <property type="match status" value="1"/>
</dbReference>
<dbReference type="FunFam" id="2.20.28.20:FF:000001">
    <property type="entry name" value="Methionine--tRNA ligase"/>
    <property type="match status" value="1"/>
</dbReference>
<dbReference type="FunFam" id="2.40.50.140:FF:000042">
    <property type="entry name" value="Methionine--tRNA ligase"/>
    <property type="match status" value="1"/>
</dbReference>
<dbReference type="Gene3D" id="3.40.50.620">
    <property type="entry name" value="HUPs"/>
    <property type="match status" value="1"/>
</dbReference>
<dbReference type="Gene3D" id="1.10.730.10">
    <property type="entry name" value="Isoleucyl-tRNA Synthetase, Domain 1"/>
    <property type="match status" value="1"/>
</dbReference>
<dbReference type="Gene3D" id="2.20.28.20">
    <property type="entry name" value="Methionyl-tRNA synthetase, Zn-domain"/>
    <property type="match status" value="1"/>
</dbReference>
<dbReference type="Gene3D" id="2.40.50.140">
    <property type="entry name" value="Nucleic acid-binding proteins"/>
    <property type="match status" value="1"/>
</dbReference>
<dbReference type="HAMAP" id="MF_00098">
    <property type="entry name" value="Met_tRNA_synth_type1"/>
    <property type="match status" value="1"/>
</dbReference>
<dbReference type="InterPro" id="IPR001412">
    <property type="entry name" value="aa-tRNA-synth_I_CS"/>
</dbReference>
<dbReference type="InterPro" id="IPR041872">
    <property type="entry name" value="Anticodon_Met"/>
</dbReference>
<dbReference type="InterPro" id="IPR004495">
    <property type="entry name" value="Met-tRNA-synth_bsu_C"/>
</dbReference>
<dbReference type="InterPro" id="IPR023458">
    <property type="entry name" value="Met-tRNA_ligase_1"/>
</dbReference>
<dbReference type="InterPro" id="IPR014758">
    <property type="entry name" value="Met-tRNA_synth"/>
</dbReference>
<dbReference type="InterPro" id="IPR015413">
    <property type="entry name" value="Methionyl/Leucyl_tRNA_Synth"/>
</dbReference>
<dbReference type="InterPro" id="IPR033911">
    <property type="entry name" value="MetRS_core"/>
</dbReference>
<dbReference type="InterPro" id="IPR029038">
    <property type="entry name" value="MetRS_Zn"/>
</dbReference>
<dbReference type="InterPro" id="IPR012340">
    <property type="entry name" value="NA-bd_OB-fold"/>
</dbReference>
<dbReference type="InterPro" id="IPR014729">
    <property type="entry name" value="Rossmann-like_a/b/a_fold"/>
</dbReference>
<dbReference type="InterPro" id="IPR002547">
    <property type="entry name" value="tRNA-bd_dom"/>
</dbReference>
<dbReference type="InterPro" id="IPR009080">
    <property type="entry name" value="tRNAsynth_Ia_anticodon-bd"/>
</dbReference>
<dbReference type="NCBIfam" id="TIGR00398">
    <property type="entry name" value="metG"/>
    <property type="match status" value="1"/>
</dbReference>
<dbReference type="NCBIfam" id="TIGR00399">
    <property type="entry name" value="metG_C_term"/>
    <property type="match status" value="1"/>
</dbReference>
<dbReference type="NCBIfam" id="NF001100">
    <property type="entry name" value="PRK00133.1"/>
    <property type="match status" value="1"/>
</dbReference>
<dbReference type="PANTHER" id="PTHR45765">
    <property type="entry name" value="METHIONINE--TRNA LIGASE"/>
    <property type="match status" value="1"/>
</dbReference>
<dbReference type="PANTHER" id="PTHR45765:SF1">
    <property type="entry name" value="METHIONINE--TRNA LIGASE, CYTOPLASMIC"/>
    <property type="match status" value="1"/>
</dbReference>
<dbReference type="Pfam" id="PF19303">
    <property type="entry name" value="Anticodon_3"/>
    <property type="match status" value="1"/>
</dbReference>
<dbReference type="Pfam" id="PF09334">
    <property type="entry name" value="tRNA-synt_1g"/>
    <property type="match status" value="1"/>
</dbReference>
<dbReference type="Pfam" id="PF01588">
    <property type="entry name" value="tRNA_bind"/>
    <property type="match status" value="1"/>
</dbReference>
<dbReference type="PRINTS" id="PR01041">
    <property type="entry name" value="TRNASYNTHMET"/>
</dbReference>
<dbReference type="SUPFAM" id="SSF47323">
    <property type="entry name" value="Anticodon-binding domain of a subclass of class I aminoacyl-tRNA synthetases"/>
    <property type="match status" value="1"/>
</dbReference>
<dbReference type="SUPFAM" id="SSF57770">
    <property type="entry name" value="Methionyl-tRNA synthetase (MetRS), Zn-domain"/>
    <property type="match status" value="1"/>
</dbReference>
<dbReference type="SUPFAM" id="SSF50249">
    <property type="entry name" value="Nucleic acid-binding proteins"/>
    <property type="match status" value="1"/>
</dbReference>
<dbReference type="SUPFAM" id="SSF52374">
    <property type="entry name" value="Nucleotidylyl transferase"/>
    <property type="match status" value="1"/>
</dbReference>
<dbReference type="PROSITE" id="PS00178">
    <property type="entry name" value="AA_TRNA_LIGASE_I"/>
    <property type="match status" value="1"/>
</dbReference>
<dbReference type="PROSITE" id="PS50886">
    <property type="entry name" value="TRBD"/>
    <property type="match status" value="1"/>
</dbReference>
<evidence type="ECO:0000250" key="1"/>
<evidence type="ECO:0000255" key="2">
    <source>
        <dbReference type="HAMAP-Rule" id="MF_00098"/>
    </source>
</evidence>
<proteinExistence type="inferred from homology"/>
<gene>
    <name evidence="2" type="primary">metG</name>
    <name type="ordered locus">Z3282</name>
    <name type="ordered locus">ECs2920</name>
</gene>
<feature type="initiator methionine" description="Removed" evidence="1">
    <location>
        <position position="1"/>
    </location>
</feature>
<feature type="chain" id="PRO_0000139131" description="Methionine--tRNA ligase">
    <location>
        <begin position="2"/>
        <end position="677"/>
    </location>
</feature>
<feature type="domain" description="tRNA-binding" evidence="2">
    <location>
        <begin position="575"/>
        <end position="677"/>
    </location>
</feature>
<feature type="short sequence motif" description="'HIGH' region">
    <location>
        <begin position="15"/>
        <end position="25"/>
    </location>
</feature>
<feature type="short sequence motif" description="'KMSKS' region">
    <location>
        <begin position="333"/>
        <end position="337"/>
    </location>
</feature>
<feature type="binding site" evidence="2">
    <location>
        <position position="146"/>
    </location>
    <ligand>
        <name>Zn(2+)</name>
        <dbReference type="ChEBI" id="CHEBI:29105"/>
    </ligand>
</feature>
<feature type="binding site" evidence="2">
    <location>
        <position position="149"/>
    </location>
    <ligand>
        <name>Zn(2+)</name>
        <dbReference type="ChEBI" id="CHEBI:29105"/>
    </ligand>
</feature>
<feature type="binding site" evidence="2">
    <location>
        <position position="159"/>
    </location>
    <ligand>
        <name>Zn(2+)</name>
        <dbReference type="ChEBI" id="CHEBI:29105"/>
    </ligand>
</feature>
<feature type="binding site" evidence="2">
    <location>
        <position position="162"/>
    </location>
    <ligand>
        <name>Zn(2+)</name>
        <dbReference type="ChEBI" id="CHEBI:29105"/>
    </ligand>
</feature>
<feature type="binding site" evidence="2">
    <location>
        <position position="336"/>
    </location>
    <ligand>
        <name>ATP</name>
        <dbReference type="ChEBI" id="CHEBI:30616"/>
    </ligand>
</feature>
<accession>Q8X7E7</accession>
<protein>
    <recommendedName>
        <fullName evidence="2">Methionine--tRNA ligase</fullName>
        <ecNumber evidence="2">6.1.1.10</ecNumber>
    </recommendedName>
    <alternativeName>
        <fullName evidence="2">Methionyl-tRNA synthetase</fullName>
        <shortName evidence="2">MetRS</shortName>
    </alternativeName>
</protein>